<reference key="1">
    <citation type="journal article" date="2002" name="Proc. Natl. Acad. Sci. U.S.A.">
        <title>Genome sequence of Streptococcus mutans UA159, a cariogenic dental pathogen.</title>
        <authorList>
            <person name="Ajdic D.J."/>
            <person name="McShan W.M."/>
            <person name="McLaughlin R.E."/>
            <person name="Savic G."/>
            <person name="Chang J."/>
            <person name="Carson M.B."/>
            <person name="Primeaux C."/>
            <person name="Tian R."/>
            <person name="Kenton S."/>
            <person name="Jia H.G."/>
            <person name="Lin S.P."/>
            <person name="Qian Y."/>
            <person name="Li S."/>
            <person name="Zhu H."/>
            <person name="Najar F.Z."/>
            <person name="Lai H."/>
            <person name="White J."/>
            <person name="Roe B.A."/>
            <person name="Ferretti J.J."/>
        </authorList>
    </citation>
    <scope>NUCLEOTIDE SEQUENCE [LARGE SCALE GENOMIC DNA]</scope>
    <source>
        <strain>ATCC 700610 / UA159</strain>
    </source>
</reference>
<sequence length="306" mass="33771">MMLNEMNKSLEGVDIRINEPLKKYTYTKVGGPADFLAFPRNRYELARIVKFANQNNLPWMVLGNASNLIVRDGGIRGFVIMFDKLNAVTVDGYVIEAEAGSNLIETTKVAQYHSLTGFEFACGIPGSIGGAVFMNAGAYGGEISHILISAQVLTRDGEIKTIEARDMRFGYRHSVLQDNQEVVVSAKFSLKPGDYTIISQEMQRLNHLRALKQPLEHPSCGSVFKRPLGHFAGQLIMEAQLMGHRIGGVEVSTKHAGFMVNVANGSAKNYEDLIADVIHRVKENSGVTLEPEVRIIGEKEVQMEDS</sequence>
<evidence type="ECO:0000255" key="1">
    <source>
        <dbReference type="HAMAP-Rule" id="MF_00037"/>
    </source>
</evidence>
<keyword id="KW-0131">Cell cycle</keyword>
<keyword id="KW-0132">Cell division</keyword>
<keyword id="KW-0133">Cell shape</keyword>
<keyword id="KW-0961">Cell wall biogenesis/degradation</keyword>
<keyword id="KW-0963">Cytoplasm</keyword>
<keyword id="KW-0274">FAD</keyword>
<keyword id="KW-0285">Flavoprotein</keyword>
<keyword id="KW-0521">NADP</keyword>
<keyword id="KW-0560">Oxidoreductase</keyword>
<keyword id="KW-0573">Peptidoglycan synthesis</keyword>
<keyword id="KW-1185">Reference proteome</keyword>
<gene>
    <name evidence="1" type="primary">murB</name>
    <name type="ordered locus">SMU_972</name>
</gene>
<proteinExistence type="inferred from homology"/>
<accession>Q8DUF8</accession>
<protein>
    <recommendedName>
        <fullName evidence="1">UDP-N-acetylenolpyruvoylglucosamine reductase</fullName>
        <ecNumber evidence="1">1.3.1.98</ecNumber>
    </recommendedName>
    <alternativeName>
        <fullName evidence="1">UDP-N-acetylmuramate dehydrogenase</fullName>
    </alternativeName>
</protein>
<comment type="function">
    <text evidence="1">Cell wall formation.</text>
</comment>
<comment type="catalytic activity">
    <reaction evidence="1">
        <text>UDP-N-acetyl-alpha-D-muramate + NADP(+) = UDP-N-acetyl-3-O-(1-carboxyvinyl)-alpha-D-glucosamine + NADPH + H(+)</text>
        <dbReference type="Rhea" id="RHEA:12248"/>
        <dbReference type="ChEBI" id="CHEBI:15378"/>
        <dbReference type="ChEBI" id="CHEBI:57783"/>
        <dbReference type="ChEBI" id="CHEBI:58349"/>
        <dbReference type="ChEBI" id="CHEBI:68483"/>
        <dbReference type="ChEBI" id="CHEBI:70757"/>
        <dbReference type="EC" id="1.3.1.98"/>
    </reaction>
</comment>
<comment type="cofactor">
    <cofactor evidence="1">
        <name>FAD</name>
        <dbReference type="ChEBI" id="CHEBI:57692"/>
    </cofactor>
</comment>
<comment type="pathway">
    <text evidence="1">Cell wall biogenesis; peptidoglycan biosynthesis.</text>
</comment>
<comment type="subcellular location">
    <subcellularLocation>
        <location evidence="1">Cytoplasm</location>
    </subcellularLocation>
</comment>
<comment type="similarity">
    <text evidence="1">Belongs to the MurB family.</text>
</comment>
<organism>
    <name type="scientific">Streptococcus mutans serotype c (strain ATCC 700610 / UA159)</name>
    <dbReference type="NCBI Taxonomy" id="210007"/>
    <lineage>
        <taxon>Bacteria</taxon>
        <taxon>Bacillati</taxon>
        <taxon>Bacillota</taxon>
        <taxon>Bacilli</taxon>
        <taxon>Lactobacillales</taxon>
        <taxon>Streptococcaceae</taxon>
        <taxon>Streptococcus</taxon>
    </lineage>
</organism>
<feature type="chain" id="PRO_0000179269" description="UDP-N-acetylenolpyruvoylglucosamine reductase">
    <location>
        <begin position="1"/>
        <end position="306"/>
    </location>
</feature>
<feature type="domain" description="FAD-binding PCMH-type" evidence="1">
    <location>
        <begin position="28"/>
        <end position="193"/>
    </location>
</feature>
<feature type="active site" evidence="1">
    <location>
        <position position="172"/>
    </location>
</feature>
<feature type="active site" description="Proton donor" evidence="1">
    <location>
        <position position="222"/>
    </location>
</feature>
<feature type="active site" evidence="1">
    <location>
        <position position="292"/>
    </location>
</feature>
<name>MURB_STRMU</name>
<dbReference type="EC" id="1.3.1.98" evidence="1"/>
<dbReference type="EMBL" id="AE014133">
    <property type="protein sequence ID" value="AAN58675.1"/>
    <property type="molecule type" value="Genomic_DNA"/>
</dbReference>
<dbReference type="RefSeq" id="NP_721369.1">
    <property type="nucleotide sequence ID" value="NC_004350.2"/>
</dbReference>
<dbReference type="RefSeq" id="WP_002262836.1">
    <property type="nucleotide sequence ID" value="NC_004350.2"/>
</dbReference>
<dbReference type="SMR" id="Q8DUF8"/>
<dbReference type="STRING" id="210007.SMU_972"/>
<dbReference type="GeneID" id="93859515"/>
<dbReference type="KEGG" id="smu:SMU_972"/>
<dbReference type="PATRIC" id="fig|210007.7.peg.866"/>
<dbReference type="eggNOG" id="COG0812">
    <property type="taxonomic scope" value="Bacteria"/>
</dbReference>
<dbReference type="HOGENOM" id="CLU_035304_1_1_9"/>
<dbReference type="OrthoDB" id="9804753at2"/>
<dbReference type="PhylomeDB" id="Q8DUF8"/>
<dbReference type="UniPathway" id="UPA00219"/>
<dbReference type="Proteomes" id="UP000002512">
    <property type="component" value="Chromosome"/>
</dbReference>
<dbReference type="GO" id="GO:0005829">
    <property type="term" value="C:cytosol"/>
    <property type="evidence" value="ECO:0007669"/>
    <property type="project" value="TreeGrafter"/>
</dbReference>
<dbReference type="GO" id="GO:0071949">
    <property type="term" value="F:FAD binding"/>
    <property type="evidence" value="ECO:0007669"/>
    <property type="project" value="InterPro"/>
</dbReference>
<dbReference type="GO" id="GO:0008762">
    <property type="term" value="F:UDP-N-acetylmuramate dehydrogenase activity"/>
    <property type="evidence" value="ECO:0007669"/>
    <property type="project" value="UniProtKB-UniRule"/>
</dbReference>
<dbReference type="GO" id="GO:0051301">
    <property type="term" value="P:cell division"/>
    <property type="evidence" value="ECO:0007669"/>
    <property type="project" value="UniProtKB-KW"/>
</dbReference>
<dbReference type="GO" id="GO:0071555">
    <property type="term" value="P:cell wall organization"/>
    <property type="evidence" value="ECO:0007669"/>
    <property type="project" value="UniProtKB-KW"/>
</dbReference>
<dbReference type="GO" id="GO:0009252">
    <property type="term" value="P:peptidoglycan biosynthetic process"/>
    <property type="evidence" value="ECO:0007669"/>
    <property type="project" value="UniProtKB-UniRule"/>
</dbReference>
<dbReference type="GO" id="GO:0008360">
    <property type="term" value="P:regulation of cell shape"/>
    <property type="evidence" value="ECO:0007669"/>
    <property type="project" value="UniProtKB-KW"/>
</dbReference>
<dbReference type="Gene3D" id="3.30.465.10">
    <property type="match status" value="1"/>
</dbReference>
<dbReference type="Gene3D" id="3.90.78.10">
    <property type="entry name" value="UDP-N-acetylenolpyruvoylglucosamine reductase, C-terminal domain"/>
    <property type="match status" value="1"/>
</dbReference>
<dbReference type="Gene3D" id="3.30.43.10">
    <property type="entry name" value="Uridine Diphospho-n-acetylenolpyruvylglucosamine Reductase, domain 2"/>
    <property type="match status" value="1"/>
</dbReference>
<dbReference type="HAMAP" id="MF_00037">
    <property type="entry name" value="MurB"/>
    <property type="match status" value="1"/>
</dbReference>
<dbReference type="InterPro" id="IPR016166">
    <property type="entry name" value="FAD-bd_PCMH"/>
</dbReference>
<dbReference type="InterPro" id="IPR036318">
    <property type="entry name" value="FAD-bd_PCMH-like_sf"/>
</dbReference>
<dbReference type="InterPro" id="IPR016167">
    <property type="entry name" value="FAD-bd_PCMH_sub1"/>
</dbReference>
<dbReference type="InterPro" id="IPR016169">
    <property type="entry name" value="FAD-bd_PCMH_sub2"/>
</dbReference>
<dbReference type="InterPro" id="IPR003170">
    <property type="entry name" value="MurB"/>
</dbReference>
<dbReference type="InterPro" id="IPR011601">
    <property type="entry name" value="MurB_C"/>
</dbReference>
<dbReference type="InterPro" id="IPR036635">
    <property type="entry name" value="MurB_C_sf"/>
</dbReference>
<dbReference type="InterPro" id="IPR006094">
    <property type="entry name" value="Oxid_FAD_bind_N"/>
</dbReference>
<dbReference type="NCBIfam" id="TIGR00179">
    <property type="entry name" value="murB"/>
    <property type="match status" value="1"/>
</dbReference>
<dbReference type="NCBIfam" id="NF010480">
    <property type="entry name" value="PRK13905.1"/>
    <property type="match status" value="1"/>
</dbReference>
<dbReference type="PANTHER" id="PTHR21071">
    <property type="entry name" value="UDP-N-ACETYLENOLPYRUVOYLGLUCOSAMINE REDUCTASE"/>
    <property type="match status" value="1"/>
</dbReference>
<dbReference type="PANTHER" id="PTHR21071:SF4">
    <property type="entry name" value="UDP-N-ACETYLENOLPYRUVOYLGLUCOSAMINE REDUCTASE"/>
    <property type="match status" value="1"/>
</dbReference>
<dbReference type="Pfam" id="PF01565">
    <property type="entry name" value="FAD_binding_4"/>
    <property type="match status" value="1"/>
</dbReference>
<dbReference type="Pfam" id="PF02873">
    <property type="entry name" value="MurB_C"/>
    <property type="match status" value="1"/>
</dbReference>
<dbReference type="SUPFAM" id="SSF56176">
    <property type="entry name" value="FAD-binding/transporter-associated domain-like"/>
    <property type="match status" value="1"/>
</dbReference>
<dbReference type="SUPFAM" id="SSF56194">
    <property type="entry name" value="Uridine diphospho-N-Acetylenolpyruvylglucosamine reductase, MurB, C-terminal domain"/>
    <property type="match status" value="1"/>
</dbReference>
<dbReference type="PROSITE" id="PS51387">
    <property type="entry name" value="FAD_PCMH"/>
    <property type="match status" value="1"/>
</dbReference>